<comment type="function">
    <text evidence="2">Involved in the intracellular transport of cholesterol. Binds cholesterol or other sterols.</text>
</comment>
<comment type="catalytic activity">
    <reaction evidence="2">
        <text>cholesterol(in) = cholesterol(out)</text>
        <dbReference type="Rhea" id="RHEA:39747"/>
        <dbReference type="ChEBI" id="CHEBI:16113"/>
    </reaction>
</comment>
<comment type="interaction">
    <interactant intactId="EBI-17217258">
        <id>Q96DR4</id>
    </interactant>
    <interactant intactId="EBI-11522760">
        <id>Q6RW13-2</id>
        <label>AGTRAP</label>
    </interactant>
    <organismsDiffer>false</organismsDiffer>
    <experiments>3</experiments>
</comment>
<comment type="interaction">
    <interactant intactId="EBI-17217258">
        <id>Q96DR4</id>
    </interactant>
    <interactant intactId="EBI-714543">
        <id>Q15041</id>
        <label>ARL6IP1</label>
    </interactant>
    <organismsDiffer>false</organismsDiffer>
    <experiments>3</experiments>
</comment>
<comment type="interaction">
    <interactant intactId="EBI-17217258">
        <id>Q96DR4</id>
    </interactant>
    <interactant intactId="EBI-10175300">
        <id>Q8TD31-3</id>
        <label>CCHCR1</label>
    </interactant>
    <organismsDiffer>false</organismsDiffer>
    <experiments>3</experiments>
</comment>
<comment type="interaction">
    <interactant intactId="EBI-17217258">
        <id>Q96DR4</id>
    </interactant>
    <interactant intactId="EBI-11110431">
        <id>Q8TB36</id>
        <label>GDAP1</label>
    </interactant>
    <organismsDiffer>false</organismsDiffer>
    <experiments>3</experiments>
</comment>
<comment type="interaction">
    <interactant intactId="EBI-17217258">
        <id>Q96DR4</id>
    </interactant>
    <interactant intactId="EBI-3923617">
        <id>Q9H2K0</id>
        <label>MTIF3</label>
    </interactant>
    <organismsDiffer>false</organismsDiffer>
    <experiments>3</experiments>
</comment>
<comment type="interaction">
    <interactant intactId="EBI-17217258">
        <id>Q96DR4</id>
    </interactant>
    <interactant intactId="EBI-9071725">
        <id>P08247</id>
        <label>SYP</label>
    </interactant>
    <organismsDiffer>false</organismsDiffer>
    <experiments>3</experiments>
</comment>
<comment type="alternative products">
    <event type="alternative splicing"/>
    <isoform>
        <id>Q96DR4-1</id>
        <name>1</name>
        <sequence type="displayed"/>
    </isoform>
    <isoform>
        <id>Q96DR4-2</id>
        <name>2</name>
        <sequence type="described" ref="VSP_057170"/>
    </isoform>
</comment>
<accession>Q96DR4</accession>
<accession>Q86TN9</accession>
<feature type="chain" id="PRO_0000220667" description="StAR-related lipid transfer protein 4">
    <location>
        <begin position="1"/>
        <end position="205"/>
    </location>
</feature>
<feature type="domain" description="START" evidence="1">
    <location>
        <begin position="1"/>
        <end position="205"/>
    </location>
</feature>
<feature type="splice variant" id="VSP_057170" description="In isoform 2." evidence="3">
    <original>ISLDWDEKRPEFVRGYNHPCGWFCVPLKDNPNQSLLTGYIQTDLRGMIPQSAVDTAMASTLTNFYGDLRKA</original>
    <variation>NNLNMLCFFSVWFKYLCFLGWMSLS</variation>
    <location>
        <begin position="134"/>
        <end position="204"/>
    </location>
</feature>
<feature type="helix" evidence="5">
    <location>
        <begin position="7"/>
        <end position="22"/>
    </location>
</feature>
<feature type="helix" evidence="5">
    <location>
        <begin position="26"/>
        <end position="28"/>
    </location>
</feature>
<feature type="strand" evidence="5">
    <location>
        <begin position="30"/>
        <end position="34"/>
    </location>
</feature>
<feature type="strand" evidence="5">
    <location>
        <begin position="36"/>
        <end position="44"/>
    </location>
</feature>
<feature type="strand" evidence="5">
    <location>
        <begin position="46"/>
        <end position="61"/>
    </location>
</feature>
<feature type="helix" evidence="5">
    <location>
        <begin position="63"/>
        <end position="70"/>
    </location>
</feature>
<feature type="strand" evidence="5">
    <location>
        <begin position="71"/>
        <end position="73"/>
    </location>
</feature>
<feature type="helix" evidence="5">
    <location>
        <begin position="74"/>
        <end position="79"/>
    </location>
</feature>
<feature type="strand" evidence="5">
    <location>
        <begin position="83"/>
        <end position="93"/>
    </location>
</feature>
<feature type="strand" evidence="5">
    <location>
        <begin position="96"/>
        <end position="103"/>
    </location>
</feature>
<feature type="turn" evidence="4">
    <location>
        <begin position="107"/>
        <end position="110"/>
    </location>
</feature>
<feature type="strand" evidence="5">
    <location>
        <begin position="114"/>
        <end position="125"/>
    </location>
</feature>
<feature type="strand" evidence="5">
    <location>
        <begin position="128"/>
        <end position="135"/>
    </location>
</feature>
<feature type="strand" evidence="5">
    <location>
        <begin position="145"/>
        <end position="147"/>
    </location>
</feature>
<feature type="strand" evidence="5">
    <location>
        <begin position="152"/>
        <end position="160"/>
    </location>
</feature>
<feature type="strand" evidence="5">
    <location>
        <begin position="163"/>
        <end position="173"/>
    </location>
</feature>
<feature type="helix" evidence="5">
    <location>
        <begin position="183"/>
        <end position="204"/>
    </location>
</feature>
<proteinExistence type="evidence at protein level"/>
<keyword id="KW-0002">3D-structure</keyword>
<keyword id="KW-0025">Alternative splicing</keyword>
<keyword id="KW-0445">Lipid transport</keyword>
<keyword id="KW-0446">Lipid-binding</keyword>
<keyword id="KW-1267">Proteomics identification</keyword>
<keyword id="KW-1185">Reference proteome</keyword>
<keyword id="KW-0813">Transport</keyword>
<evidence type="ECO:0000255" key="1">
    <source>
        <dbReference type="PROSITE-ProRule" id="PRU00197"/>
    </source>
</evidence>
<evidence type="ECO:0000269" key="2">
    <source>
    </source>
</evidence>
<evidence type="ECO:0000303" key="3">
    <source>
    </source>
</evidence>
<evidence type="ECO:0007829" key="4">
    <source>
        <dbReference type="PDB" id="6L1D"/>
    </source>
</evidence>
<evidence type="ECO:0007829" key="5">
    <source>
        <dbReference type="PDB" id="6L1M"/>
    </source>
</evidence>
<sequence length="205" mass="23517">MEGLSDVASFATKLKNTLIQYHSIEEDKWRVAKKTKDVTVWRKPSEEFNGYLYKAQGVIDDLVYSIIDHIRPGPCRLDWDSLMTSLDILENFEENCCVMRYTTAGQLWNIISPREFVDFSYTVGYKEGLLSCGISLDWDEKRPEFVRGYNHPCGWFCVPLKDNPNQSLLTGYIQTDLRGMIPQSAVDTAMASTLTNFYGDLRKAL</sequence>
<name>STAR4_HUMAN</name>
<protein>
    <recommendedName>
        <fullName>StAR-related lipid transfer protein 4</fullName>
    </recommendedName>
    <alternativeName>
        <fullName>START domain-containing protein 4</fullName>
        <shortName>StARD4</shortName>
    </alternativeName>
</protein>
<gene>
    <name type="primary">STARD4</name>
</gene>
<reference key="1">
    <citation type="journal article" date="2002" name="Proc. Natl. Acad. Sci. U.S.A.">
        <title>The cholesterol-regulated StarD4 gene encodes a StAR-related lipid transfer protein with two closely related homologues, StarD5 and StarD6.</title>
        <authorList>
            <person name="Soccio R.E."/>
            <person name="Adams R.M."/>
            <person name="Romanowski M.J."/>
            <person name="Sehayek E."/>
            <person name="Burley S.K."/>
            <person name="Breslow J.L."/>
        </authorList>
    </citation>
    <scope>NUCLEOTIDE SEQUENCE [MRNA] (ISOFORM 1)</scope>
    <source>
        <tissue>Liver</tissue>
    </source>
</reference>
<reference key="2">
    <citation type="journal article" date="2004" name="Nat. Genet.">
        <title>Complete sequencing and characterization of 21,243 full-length human cDNAs.</title>
        <authorList>
            <person name="Ota T."/>
            <person name="Suzuki Y."/>
            <person name="Nishikawa T."/>
            <person name="Otsuki T."/>
            <person name="Sugiyama T."/>
            <person name="Irie R."/>
            <person name="Wakamatsu A."/>
            <person name="Hayashi K."/>
            <person name="Sato H."/>
            <person name="Nagai K."/>
            <person name="Kimura K."/>
            <person name="Makita H."/>
            <person name="Sekine M."/>
            <person name="Obayashi M."/>
            <person name="Nishi T."/>
            <person name="Shibahara T."/>
            <person name="Tanaka T."/>
            <person name="Ishii S."/>
            <person name="Yamamoto J."/>
            <person name="Saito K."/>
            <person name="Kawai Y."/>
            <person name="Isono Y."/>
            <person name="Nakamura Y."/>
            <person name="Nagahari K."/>
            <person name="Murakami K."/>
            <person name="Yasuda T."/>
            <person name="Iwayanagi T."/>
            <person name="Wagatsuma M."/>
            <person name="Shiratori A."/>
            <person name="Sudo H."/>
            <person name="Hosoiri T."/>
            <person name="Kaku Y."/>
            <person name="Kodaira H."/>
            <person name="Kondo H."/>
            <person name="Sugawara M."/>
            <person name="Takahashi M."/>
            <person name="Kanda K."/>
            <person name="Yokoi T."/>
            <person name="Furuya T."/>
            <person name="Kikkawa E."/>
            <person name="Omura Y."/>
            <person name="Abe K."/>
            <person name="Kamihara K."/>
            <person name="Katsuta N."/>
            <person name="Sato K."/>
            <person name="Tanikawa M."/>
            <person name="Yamazaki M."/>
            <person name="Ninomiya K."/>
            <person name="Ishibashi T."/>
            <person name="Yamashita H."/>
            <person name="Murakawa K."/>
            <person name="Fujimori K."/>
            <person name="Tanai H."/>
            <person name="Kimata M."/>
            <person name="Watanabe M."/>
            <person name="Hiraoka S."/>
            <person name="Chiba Y."/>
            <person name="Ishida S."/>
            <person name="Ono Y."/>
            <person name="Takiguchi S."/>
            <person name="Watanabe S."/>
            <person name="Yosida M."/>
            <person name="Hotuta T."/>
            <person name="Kusano J."/>
            <person name="Kanehori K."/>
            <person name="Takahashi-Fujii A."/>
            <person name="Hara H."/>
            <person name="Tanase T.-O."/>
            <person name="Nomura Y."/>
            <person name="Togiya S."/>
            <person name="Komai F."/>
            <person name="Hara R."/>
            <person name="Takeuchi K."/>
            <person name="Arita M."/>
            <person name="Imose N."/>
            <person name="Musashino K."/>
            <person name="Yuuki H."/>
            <person name="Oshima A."/>
            <person name="Sasaki N."/>
            <person name="Aotsuka S."/>
            <person name="Yoshikawa Y."/>
            <person name="Matsunawa H."/>
            <person name="Ichihara T."/>
            <person name="Shiohata N."/>
            <person name="Sano S."/>
            <person name="Moriya S."/>
            <person name="Momiyama H."/>
            <person name="Satoh N."/>
            <person name="Takami S."/>
            <person name="Terashima Y."/>
            <person name="Suzuki O."/>
            <person name="Nakagawa S."/>
            <person name="Senoh A."/>
            <person name="Mizoguchi H."/>
            <person name="Goto Y."/>
            <person name="Shimizu F."/>
            <person name="Wakebe H."/>
            <person name="Hishigaki H."/>
            <person name="Watanabe T."/>
            <person name="Sugiyama A."/>
            <person name="Takemoto M."/>
            <person name="Kawakami B."/>
            <person name="Yamazaki M."/>
            <person name="Watanabe K."/>
            <person name="Kumagai A."/>
            <person name="Itakura S."/>
            <person name="Fukuzumi Y."/>
            <person name="Fujimori Y."/>
            <person name="Komiyama M."/>
            <person name="Tashiro H."/>
            <person name="Tanigami A."/>
            <person name="Fujiwara T."/>
            <person name="Ono T."/>
            <person name="Yamada K."/>
            <person name="Fujii Y."/>
            <person name="Ozaki K."/>
            <person name="Hirao M."/>
            <person name="Ohmori Y."/>
            <person name="Kawabata A."/>
            <person name="Hikiji T."/>
            <person name="Kobatake N."/>
            <person name="Inagaki H."/>
            <person name="Ikema Y."/>
            <person name="Okamoto S."/>
            <person name="Okitani R."/>
            <person name="Kawakami T."/>
            <person name="Noguchi S."/>
            <person name="Itoh T."/>
            <person name="Shigeta K."/>
            <person name="Senba T."/>
            <person name="Matsumura K."/>
            <person name="Nakajima Y."/>
            <person name="Mizuno T."/>
            <person name="Morinaga M."/>
            <person name="Sasaki M."/>
            <person name="Togashi T."/>
            <person name="Oyama M."/>
            <person name="Hata H."/>
            <person name="Watanabe M."/>
            <person name="Komatsu T."/>
            <person name="Mizushima-Sugano J."/>
            <person name="Satoh T."/>
            <person name="Shirai Y."/>
            <person name="Takahashi Y."/>
            <person name="Nakagawa K."/>
            <person name="Okumura K."/>
            <person name="Nagase T."/>
            <person name="Nomura N."/>
            <person name="Kikuchi H."/>
            <person name="Masuho Y."/>
            <person name="Yamashita R."/>
            <person name="Nakai K."/>
            <person name="Yada T."/>
            <person name="Nakamura Y."/>
            <person name="Ohara O."/>
            <person name="Isogai T."/>
            <person name="Sugano S."/>
        </authorList>
    </citation>
    <scope>NUCLEOTIDE SEQUENCE [LARGE SCALE MRNA] (ISOFORM 1)</scope>
    <source>
        <tissue>Neuroblastoma</tissue>
    </source>
</reference>
<reference key="3">
    <citation type="journal article" date="2004" name="Nature">
        <title>The DNA sequence and comparative analysis of human chromosome 5.</title>
        <authorList>
            <person name="Schmutz J."/>
            <person name="Martin J."/>
            <person name="Terry A."/>
            <person name="Couronne O."/>
            <person name="Grimwood J."/>
            <person name="Lowry S."/>
            <person name="Gordon L.A."/>
            <person name="Scott D."/>
            <person name="Xie G."/>
            <person name="Huang W."/>
            <person name="Hellsten U."/>
            <person name="Tran-Gyamfi M."/>
            <person name="She X."/>
            <person name="Prabhakar S."/>
            <person name="Aerts A."/>
            <person name="Altherr M."/>
            <person name="Bajorek E."/>
            <person name="Black S."/>
            <person name="Branscomb E."/>
            <person name="Caoile C."/>
            <person name="Challacombe J.F."/>
            <person name="Chan Y.M."/>
            <person name="Denys M."/>
            <person name="Detter J.C."/>
            <person name="Escobar J."/>
            <person name="Flowers D."/>
            <person name="Fotopulos D."/>
            <person name="Glavina T."/>
            <person name="Gomez M."/>
            <person name="Gonzales E."/>
            <person name="Goodstein D."/>
            <person name="Grigoriev I."/>
            <person name="Groza M."/>
            <person name="Hammon N."/>
            <person name="Hawkins T."/>
            <person name="Haydu L."/>
            <person name="Israni S."/>
            <person name="Jett J."/>
            <person name="Kadner K."/>
            <person name="Kimball H."/>
            <person name="Kobayashi A."/>
            <person name="Lopez F."/>
            <person name="Lou Y."/>
            <person name="Martinez D."/>
            <person name="Medina C."/>
            <person name="Morgan J."/>
            <person name="Nandkeshwar R."/>
            <person name="Noonan J.P."/>
            <person name="Pitluck S."/>
            <person name="Pollard M."/>
            <person name="Predki P."/>
            <person name="Priest J."/>
            <person name="Ramirez L."/>
            <person name="Retterer J."/>
            <person name="Rodriguez A."/>
            <person name="Rogers S."/>
            <person name="Salamov A."/>
            <person name="Salazar A."/>
            <person name="Thayer N."/>
            <person name="Tice H."/>
            <person name="Tsai M."/>
            <person name="Ustaszewska A."/>
            <person name="Vo N."/>
            <person name="Wheeler J."/>
            <person name="Wu K."/>
            <person name="Yang J."/>
            <person name="Dickson M."/>
            <person name="Cheng J.-F."/>
            <person name="Eichler E.E."/>
            <person name="Olsen A."/>
            <person name="Pennacchio L.A."/>
            <person name="Rokhsar D.S."/>
            <person name="Richardson P."/>
            <person name="Lucas S.M."/>
            <person name="Myers R.M."/>
            <person name="Rubin E.M."/>
        </authorList>
    </citation>
    <scope>NUCLEOTIDE SEQUENCE [LARGE SCALE GENOMIC DNA]</scope>
</reference>
<reference key="4">
    <citation type="submission" date="2005-09" db="EMBL/GenBank/DDBJ databases">
        <authorList>
            <person name="Mural R.J."/>
            <person name="Istrail S."/>
            <person name="Sutton G."/>
            <person name="Florea L."/>
            <person name="Halpern A.L."/>
            <person name="Mobarry C.M."/>
            <person name="Lippert R."/>
            <person name="Walenz B."/>
            <person name="Shatkay H."/>
            <person name="Dew I."/>
            <person name="Miller J.R."/>
            <person name="Flanigan M.J."/>
            <person name="Edwards N.J."/>
            <person name="Bolanos R."/>
            <person name="Fasulo D."/>
            <person name="Halldorsson B.V."/>
            <person name="Hannenhalli S."/>
            <person name="Turner R."/>
            <person name="Yooseph S."/>
            <person name="Lu F."/>
            <person name="Nusskern D.R."/>
            <person name="Shue B.C."/>
            <person name="Zheng X.H."/>
            <person name="Zhong F."/>
            <person name="Delcher A.L."/>
            <person name="Huson D.H."/>
            <person name="Kravitz S.A."/>
            <person name="Mouchard L."/>
            <person name="Reinert K."/>
            <person name="Remington K.A."/>
            <person name="Clark A.G."/>
            <person name="Waterman M.S."/>
            <person name="Eichler E.E."/>
            <person name="Adams M.D."/>
            <person name="Hunkapiller M.W."/>
            <person name="Myers E.W."/>
            <person name="Venter J.C."/>
        </authorList>
    </citation>
    <scope>NUCLEOTIDE SEQUENCE [LARGE SCALE GENOMIC DNA]</scope>
</reference>
<reference key="5">
    <citation type="journal article" date="2004" name="Genome Res.">
        <title>The status, quality, and expansion of the NIH full-length cDNA project: the Mammalian Gene Collection (MGC).</title>
        <authorList>
            <consortium name="The MGC Project Team"/>
        </authorList>
    </citation>
    <scope>NUCLEOTIDE SEQUENCE [LARGE SCALE MRNA] (ISOFORM 2)</scope>
    <source>
        <tissue>Brain</tissue>
    </source>
</reference>
<reference key="6">
    <citation type="journal article" date="2008" name="J. Lipid Res.">
        <title>Intracellular cholesterol transporter StarD4 binds free cholesterol and increases cholesteryl ester formation.</title>
        <authorList>
            <person name="Rodriguez-Agudo D."/>
            <person name="Ren S."/>
            <person name="Wong E."/>
            <person name="Marques D."/>
            <person name="Redford K."/>
            <person name="Gil G."/>
            <person name="Hylemon P."/>
            <person name="Pandak W.M."/>
        </authorList>
    </citation>
    <scope>CATALYTIC ACTIVITY</scope>
    <scope>FUNCTION</scope>
</reference>
<dbReference type="EMBL" id="AF480299">
    <property type="protein sequence ID" value="AAL87129.1"/>
    <property type="molecule type" value="mRNA"/>
</dbReference>
<dbReference type="EMBL" id="AK054566">
    <property type="protein sequence ID" value="BAB70759.1"/>
    <property type="molecule type" value="mRNA"/>
</dbReference>
<dbReference type="EMBL" id="AC011422">
    <property type="status" value="NOT_ANNOTATED_CDS"/>
    <property type="molecule type" value="Genomic_DNA"/>
</dbReference>
<dbReference type="EMBL" id="CH471086">
    <property type="protein sequence ID" value="EAW49029.1"/>
    <property type="molecule type" value="Genomic_DNA"/>
</dbReference>
<dbReference type="EMBL" id="BC042956">
    <property type="protein sequence ID" value="AAH42956.1"/>
    <property type="molecule type" value="mRNA"/>
</dbReference>
<dbReference type="CCDS" id="CCDS4104.1">
    <molecule id="Q96DR4-1"/>
</dbReference>
<dbReference type="CCDS" id="CCDS78046.1">
    <molecule id="Q96DR4-2"/>
</dbReference>
<dbReference type="RefSeq" id="NP_001294985.1">
    <molecule id="Q96DR4-1"/>
    <property type="nucleotide sequence ID" value="NM_001308056.2"/>
</dbReference>
<dbReference type="RefSeq" id="NP_001294986.1">
    <molecule id="Q96DR4-2"/>
    <property type="nucleotide sequence ID" value="NM_001308057.2"/>
</dbReference>
<dbReference type="RefSeq" id="NP_001294987.1">
    <molecule id="Q96DR4-2"/>
    <property type="nucleotide sequence ID" value="NM_001308058.2"/>
</dbReference>
<dbReference type="RefSeq" id="NP_001294988.1">
    <property type="nucleotide sequence ID" value="NM_001308059.1"/>
</dbReference>
<dbReference type="RefSeq" id="NP_001294989.1">
    <property type="nucleotide sequence ID" value="NM_001308060.1"/>
</dbReference>
<dbReference type="RefSeq" id="NP_001294990.1">
    <property type="nucleotide sequence ID" value="NM_001308061.1"/>
</dbReference>
<dbReference type="RefSeq" id="NP_631903.1">
    <molecule id="Q96DR4-1"/>
    <property type="nucleotide sequence ID" value="NM_139164.3"/>
</dbReference>
<dbReference type="PDB" id="6L1D">
    <property type="method" value="X-ray"/>
    <property type="resolution" value="1.95 A"/>
    <property type="chains" value="A/B=2-205"/>
</dbReference>
<dbReference type="PDB" id="6L1M">
    <property type="method" value="X-ray"/>
    <property type="resolution" value="1.70 A"/>
    <property type="chains" value="A=2-205"/>
</dbReference>
<dbReference type="PDBsum" id="6L1D"/>
<dbReference type="PDBsum" id="6L1M"/>
<dbReference type="SMR" id="Q96DR4"/>
<dbReference type="BioGRID" id="126398">
    <property type="interactions" value="6"/>
</dbReference>
<dbReference type="FunCoup" id="Q96DR4">
    <property type="interactions" value="496"/>
</dbReference>
<dbReference type="IntAct" id="Q96DR4">
    <property type="interactions" value="6"/>
</dbReference>
<dbReference type="STRING" id="9606.ENSP00000296632"/>
<dbReference type="SwissLipids" id="SLP:000000718"/>
<dbReference type="SwissLipids" id="SLP:000000719"/>
<dbReference type="TCDB" id="8.A.120.3.1">
    <property type="family name" value="the mitochondrial star-related lipid transfer protein (star) family"/>
</dbReference>
<dbReference type="GlyGen" id="Q96DR4">
    <property type="glycosylation" value="1 site, 1 N-linked glycan (1 site)"/>
</dbReference>
<dbReference type="iPTMnet" id="Q96DR4"/>
<dbReference type="PhosphoSitePlus" id="Q96DR4"/>
<dbReference type="BioMuta" id="STARD4"/>
<dbReference type="DMDM" id="25091316"/>
<dbReference type="jPOST" id="Q96DR4"/>
<dbReference type="MassIVE" id="Q96DR4"/>
<dbReference type="PaxDb" id="9606-ENSP00000296632"/>
<dbReference type="PeptideAtlas" id="Q96DR4"/>
<dbReference type="ProteomicsDB" id="69718"/>
<dbReference type="ProteomicsDB" id="76305">
    <molecule id="Q96DR4-1"/>
</dbReference>
<dbReference type="Pumba" id="Q96DR4"/>
<dbReference type="Antibodypedia" id="25323">
    <property type="antibodies" value="111 antibodies from 17 providers"/>
</dbReference>
<dbReference type="DNASU" id="134429"/>
<dbReference type="Ensembl" id="ENST00000296632.8">
    <molecule id="Q96DR4-1"/>
    <property type="protein sequence ID" value="ENSP00000296632.3"/>
    <property type="gene ID" value="ENSG00000164211.13"/>
</dbReference>
<dbReference type="Ensembl" id="ENST00000502322.5">
    <molecule id="Q96DR4-2"/>
    <property type="protein sequence ID" value="ENSP00000427639.1"/>
    <property type="gene ID" value="ENSG00000164211.13"/>
</dbReference>
<dbReference type="Ensembl" id="ENST00000505803.5">
    <molecule id="Q96DR4-1"/>
    <property type="protein sequence ID" value="ENSP00000427478.2"/>
    <property type="gene ID" value="ENSG00000164211.13"/>
</dbReference>
<dbReference type="GeneID" id="134429"/>
<dbReference type="KEGG" id="hsa:134429"/>
<dbReference type="MANE-Select" id="ENST00000296632.8">
    <property type="protein sequence ID" value="ENSP00000296632.3"/>
    <property type="RefSeq nucleotide sequence ID" value="NM_139164.3"/>
    <property type="RefSeq protein sequence ID" value="NP_631903.1"/>
</dbReference>
<dbReference type="UCSC" id="uc003kph.2">
    <molecule id="Q96DR4-1"/>
    <property type="organism name" value="human"/>
</dbReference>
<dbReference type="AGR" id="HGNC:18058"/>
<dbReference type="CTD" id="134429"/>
<dbReference type="DisGeNET" id="134429"/>
<dbReference type="GeneCards" id="STARD4"/>
<dbReference type="HGNC" id="HGNC:18058">
    <property type="gene designation" value="STARD4"/>
</dbReference>
<dbReference type="HPA" id="ENSG00000164211">
    <property type="expression patterns" value="Low tissue specificity"/>
</dbReference>
<dbReference type="MIM" id="607049">
    <property type="type" value="gene"/>
</dbReference>
<dbReference type="neXtProt" id="NX_Q96DR4"/>
<dbReference type="OpenTargets" id="ENSG00000164211"/>
<dbReference type="PharmGKB" id="PA38284"/>
<dbReference type="VEuPathDB" id="HostDB:ENSG00000164211"/>
<dbReference type="eggNOG" id="KOG3845">
    <property type="taxonomic scope" value="Eukaryota"/>
</dbReference>
<dbReference type="GeneTree" id="ENSGT00940000159243"/>
<dbReference type="HOGENOM" id="CLU_093200_0_0_1"/>
<dbReference type="InParanoid" id="Q96DR4"/>
<dbReference type="OMA" id="TTQYEEG"/>
<dbReference type="OrthoDB" id="196858at2759"/>
<dbReference type="PAN-GO" id="Q96DR4">
    <property type="GO annotations" value="7 GO annotations based on evolutionary models"/>
</dbReference>
<dbReference type="PhylomeDB" id="Q96DR4"/>
<dbReference type="PathwayCommons" id="Q96DR4"/>
<dbReference type="Reactome" id="R-HSA-196108">
    <property type="pathway name" value="Pregnenolone biosynthesis"/>
</dbReference>
<dbReference type="SignaLink" id="Q96DR4"/>
<dbReference type="BioGRID-ORCS" id="134429">
    <property type="hits" value="28 hits in 1168 CRISPR screens"/>
</dbReference>
<dbReference type="GeneWiki" id="STARD4"/>
<dbReference type="GenomeRNAi" id="134429"/>
<dbReference type="Pharos" id="Q96DR4">
    <property type="development level" value="Tbio"/>
</dbReference>
<dbReference type="PRO" id="PR:Q96DR4"/>
<dbReference type="Proteomes" id="UP000005640">
    <property type="component" value="Chromosome 5"/>
</dbReference>
<dbReference type="RNAct" id="Q96DR4">
    <property type="molecule type" value="protein"/>
</dbReference>
<dbReference type="Bgee" id="ENSG00000164211">
    <property type="expression patterns" value="Expressed in adrenal tissue and 148 other cell types or tissues"/>
</dbReference>
<dbReference type="ExpressionAtlas" id="Q96DR4">
    <property type="expression patterns" value="baseline and differential"/>
</dbReference>
<dbReference type="GO" id="GO:0005737">
    <property type="term" value="C:cytoplasm"/>
    <property type="evidence" value="ECO:0000314"/>
    <property type="project" value="UniProtKB"/>
</dbReference>
<dbReference type="GO" id="GO:0031410">
    <property type="term" value="C:cytoplasmic vesicle"/>
    <property type="evidence" value="ECO:0000314"/>
    <property type="project" value="CACAO"/>
</dbReference>
<dbReference type="GO" id="GO:0005829">
    <property type="term" value="C:cytosol"/>
    <property type="evidence" value="ECO:0000318"/>
    <property type="project" value="GO_Central"/>
</dbReference>
<dbReference type="GO" id="GO:0005783">
    <property type="term" value="C:endoplasmic reticulum"/>
    <property type="evidence" value="ECO:0000318"/>
    <property type="project" value="GO_Central"/>
</dbReference>
<dbReference type="GO" id="GO:0015485">
    <property type="term" value="F:cholesterol binding"/>
    <property type="evidence" value="ECO:0000314"/>
    <property type="project" value="BHF-UCL"/>
</dbReference>
<dbReference type="GO" id="GO:0120020">
    <property type="term" value="F:cholesterol transfer activity"/>
    <property type="evidence" value="ECO:0000314"/>
    <property type="project" value="BHF-UCL"/>
</dbReference>
<dbReference type="GO" id="GO:0070508">
    <property type="term" value="P:cholesterol import"/>
    <property type="evidence" value="ECO:0000314"/>
    <property type="project" value="BHF-UCL"/>
</dbReference>
<dbReference type="GO" id="GO:0010879">
    <property type="term" value="P:cholesterol transport involved in cholesterol storage"/>
    <property type="evidence" value="ECO:0000314"/>
    <property type="project" value="BHF-UCL"/>
</dbReference>
<dbReference type="GO" id="GO:0032367">
    <property type="term" value="P:intracellular cholesterol transport"/>
    <property type="evidence" value="ECO:0000314"/>
    <property type="project" value="BHF-UCL"/>
</dbReference>
<dbReference type="GO" id="GO:0070859">
    <property type="term" value="P:positive regulation of bile acid biosynthetic process"/>
    <property type="evidence" value="ECO:0000314"/>
    <property type="project" value="BHF-UCL"/>
</dbReference>
<dbReference type="GO" id="GO:0090205">
    <property type="term" value="P:positive regulation of cholesterol metabolic process"/>
    <property type="evidence" value="ECO:0000314"/>
    <property type="project" value="BHF-UCL"/>
</dbReference>
<dbReference type="FunFam" id="3.30.530.20:FF:000054">
    <property type="entry name" value="StAR-related lipid transfer protein 4"/>
    <property type="match status" value="1"/>
</dbReference>
<dbReference type="Gene3D" id="3.30.530.20">
    <property type="match status" value="1"/>
</dbReference>
<dbReference type="InterPro" id="IPR042555">
    <property type="entry name" value="StarD4"/>
</dbReference>
<dbReference type="InterPro" id="IPR023393">
    <property type="entry name" value="START-like_dom_sf"/>
</dbReference>
<dbReference type="InterPro" id="IPR002913">
    <property type="entry name" value="START_lipid-bd_dom"/>
</dbReference>
<dbReference type="PANTHER" id="PTHR47006">
    <property type="entry name" value="STAR-RELATED LIPID TRANSFER PROTEIN 4"/>
    <property type="match status" value="1"/>
</dbReference>
<dbReference type="PANTHER" id="PTHR47006:SF1">
    <property type="entry name" value="STAR-RELATED LIPID TRANSFER PROTEIN 4"/>
    <property type="match status" value="1"/>
</dbReference>
<dbReference type="Pfam" id="PF01852">
    <property type="entry name" value="START"/>
    <property type="match status" value="1"/>
</dbReference>
<dbReference type="SMART" id="SM00234">
    <property type="entry name" value="START"/>
    <property type="match status" value="1"/>
</dbReference>
<dbReference type="SUPFAM" id="SSF55961">
    <property type="entry name" value="Bet v1-like"/>
    <property type="match status" value="1"/>
</dbReference>
<dbReference type="PROSITE" id="PS50848">
    <property type="entry name" value="START"/>
    <property type="match status" value="1"/>
</dbReference>
<organism>
    <name type="scientific">Homo sapiens</name>
    <name type="common">Human</name>
    <dbReference type="NCBI Taxonomy" id="9606"/>
    <lineage>
        <taxon>Eukaryota</taxon>
        <taxon>Metazoa</taxon>
        <taxon>Chordata</taxon>
        <taxon>Craniata</taxon>
        <taxon>Vertebrata</taxon>
        <taxon>Euteleostomi</taxon>
        <taxon>Mammalia</taxon>
        <taxon>Eutheria</taxon>
        <taxon>Euarchontoglires</taxon>
        <taxon>Primates</taxon>
        <taxon>Haplorrhini</taxon>
        <taxon>Catarrhini</taxon>
        <taxon>Hominidae</taxon>
        <taxon>Homo</taxon>
    </lineage>
</organism>